<organism>
    <name type="scientific">Acanthamoeba polyphaga mimivirus</name>
    <name type="common">APMV</name>
    <dbReference type="NCBI Taxonomy" id="212035"/>
    <lineage>
        <taxon>Viruses</taxon>
        <taxon>Varidnaviria</taxon>
        <taxon>Bamfordvirae</taxon>
        <taxon>Nucleocytoviricota</taxon>
        <taxon>Megaviricetes</taxon>
        <taxon>Imitervirales</taxon>
        <taxon>Mimiviridae</taxon>
        <taxon>Megamimivirinae</taxon>
        <taxon>Mimivirus</taxon>
        <taxon>Mimivirus bradfordmassiliense</taxon>
    </lineage>
</organism>
<name>YR547_MIMIV</name>
<proteinExistence type="predicted"/>
<sequence>MALLFENMCNFPGFDPHSGEFELPKRFCSNNSLSLFSTPVMFHSYKSALVDTCRYTTDDNSTDDSYLRYGDEFSIATKTEKARQKTVSKKYKSRKGRRYTRERNISSEKNKTDKSHKVRVGKIQNINND</sequence>
<organismHost>
    <name type="scientific">Acanthamoeba polyphaga</name>
    <name type="common">Amoeba</name>
    <dbReference type="NCBI Taxonomy" id="5757"/>
</organismHost>
<reference key="1">
    <citation type="journal article" date="2004" name="Science">
        <title>The 1.2-megabase genome sequence of Mimivirus.</title>
        <authorList>
            <person name="Raoult D."/>
            <person name="Audic S."/>
            <person name="Robert C."/>
            <person name="Abergel C."/>
            <person name="Renesto P."/>
            <person name="Ogata H."/>
            <person name="La Scola B."/>
            <person name="Susan M."/>
            <person name="Claverie J.-M."/>
        </authorList>
    </citation>
    <scope>NUCLEOTIDE SEQUENCE [LARGE SCALE GENOMIC DNA]</scope>
    <source>
        <strain>Rowbotham-Bradford</strain>
    </source>
</reference>
<dbReference type="EMBL" id="AY653733">
    <property type="protein sequence ID" value="AAV50811.1"/>
    <property type="molecule type" value="Genomic_DNA"/>
</dbReference>
<dbReference type="KEGG" id="vg:9925181"/>
<dbReference type="Proteomes" id="UP000001134">
    <property type="component" value="Genome"/>
</dbReference>
<protein>
    <recommendedName>
        <fullName>Uncharacterized protein R547</fullName>
    </recommendedName>
</protein>
<feature type="chain" id="PRO_0000247389" description="Uncharacterized protein R547">
    <location>
        <begin position="1"/>
        <end position="129"/>
    </location>
</feature>
<feature type="region of interest" description="Disordered" evidence="1">
    <location>
        <begin position="84"/>
        <end position="129"/>
    </location>
</feature>
<feature type="compositionally biased region" description="Basic residues" evidence="1">
    <location>
        <begin position="84"/>
        <end position="98"/>
    </location>
</feature>
<feature type="compositionally biased region" description="Basic and acidic residues" evidence="1">
    <location>
        <begin position="99"/>
        <end position="115"/>
    </location>
</feature>
<gene>
    <name type="ordered locus">MIMI_R547</name>
</gene>
<accession>Q5UR30</accession>
<keyword id="KW-1185">Reference proteome</keyword>
<evidence type="ECO:0000256" key="1">
    <source>
        <dbReference type="SAM" id="MobiDB-lite"/>
    </source>
</evidence>